<evidence type="ECO:0000256" key="1">
    <source>
        <dbReference type="SAM" id="MobiDB-lite"/>
    </source>
</evidence>
<evidence type="ECO:0000305" key="2"/>
<organism>
    <name type="scientific">Rhodobacter capsulatus</name>
    <name type="common">Rhodopseudomonas capsulata</name>
    <dbReference type="NCBI Taxonomy" id="1061"/>
    <lineage>
        <taxon>Bacteria</taxon>
        <taxon>Pseudomonadati</taxon>
        <taxon>Pseudomonadota</taxon>
        <taxon>Alphaproteobacteria</taxon>
        <taxon>Rhodobacterales</taxon>
        <taxon>Rhodobacter group</taxon>
        <taxon>Rhodobacter</taxon>
    </lineage>
</organism>
<dbReference type="EMBL" id="X68444">
    <property type="protein sequence ID" value="CAA48486.1"/>
    <property type="molecule type" value="Genomic_DNA"/>
</dbReference>
<dbReference type="PIR" id="S34815">
    <property type="entry name" value="S34815"/>
</dbReference>
<dbReference type="RefSeq" id="WP_013068967.1">
    <property type="nucleotide sequence ID" value="NZ_JAOTPJ010000071.1"/>
</dbReference>
<dbReference type="SMR" id="Q07178"/>
<dbReference type="GO" id="GO:0005506">
    <property type="term" value="F:iron ion binding"/>
    <property type="evidence" value="ECO:0007669"/>
    <property type="project" value="InterPro"/>
</dbReference>
<dbReference type="GO" id="GO:0051536">
    <property type="term" value="F:iron-sulfur cluster binding"/>
    <property type="evidence" value="ECO:0007669"/>
    <property type="project" value="InterPro"/>
</dbReference>
<dbReference type="GO" id="GO:0016226">
    <property type="term" value="P:iron-sulfur cluster assembly"/>
    <property type="evidence" value="ECO:0007669"/>
    <property type="project" value="InterPro"/>
</dbReference>
<dbReference type="GO" id="GO:0009399">
    <property type="term" value="P:nitrogen fixation"/>
    <property type="evidence" value="ECO:0007669"/>
    <property type="project" value="UniProtKB-KW"/>
</dbReference>
<dbReference type="Gene3D" id="3.30.300.130">
    <property type="entry name" value="Fe-S cluster assembly (FSCA)"/>
    <property type="match status" value="1"/>
</dbReference>
<dbReference type="InterPro" id="IPR034904">
    <property type="entry name" value="FSCA_dom_sf"/>
</dbReference>
<dbReference type="InterPro" id="IPR001075">
    <property type="entry name" value="NIF_FeS_clus_asmbl_NifU_C"/>
</dbReference>
<dbReference type="Pfam" id="PF01106">
    <property type="entry name" value="NifU"/>
    <property type="match status" value="1"/>
</dbReference>
<dbReference type="SUPFAM" id="SSF117916">
    <property type="entry name" value="Fe-S cluster assembly (FSCA) domain-like"/>
    <property type="match status" value="1"/>
</dbReference>
<feature type="chain" id="PRO_0000166176" description="Nitrogen fixation protein NifU 1">
    <location>
        <begin position="1"/>
        <end position="135"/>
    </location>
</feature>
<feature type="region of interest" description="Disordered" evidence="1">
    <location>
        <begin position="1"/>
        <end position="29"/>
    </location>
</feature>
<feature type="compositionally biased region" description="Basic and acidic residues" evidence="1">
    <location>
        <begin position="1"/>
        <end position="10"/>
    </location>
</feature>
<feature type="compositionally biased region" description="Low complexity" evidence="1">
    <location>
        <begin position="18"/>
        <end position="29"/>
    </location>
</feature>
<reference key="1">
    <citation type="journal article" date="1993" name="Mol. Gen. Genet.">
        <title>Nucleotide sequence and genetic analysis of the Rhodobacter capsulatus ORF6-nifUI SVW gene region: possible role of NifW in homocitrate processing.</title>
        <authorList>
            <person name="Masepohl B."/>
            <person name="Angermueller S."/>
            <person name="Hennecke S."/>
            <person name="Huebner P."/>
            <person name="Moreno-Vivian C."/>
            <person name="Klipp W."/>
        </authorList>
    </citation>
    <scope>NUCLEOTIDE SEQUENCE [GENOMIC DNA]</scope>
    <source>
        <strain>ATCC 33303 / B10</strain>
    </source>
</reference>
<accession>Q07178</accession>
<comment type="function">
    <text evidence="2">May be involved in the formation or repair of [Fe-S] clusters present in iron-sulfur proteins.</text>
</comment>
<comment type="similarity">
    <text evidence="2">Belongs to the NifU family.</text>
</comment>
<sequence length="135" mass="14333">MRDMQDDDTKSPAPPPAAAAAARRAAGQAAPDASALRDRFAKLAQADTPEAATDAAAAADDEVTRIRALIDEMRPTFRRDGGDIELVRVEGAKVIVHLSGACAGCMLAGQTLYGVQKRITDVLGRPFRVIPDIRH</sequence>
<protein>
    <recommendedName>
        <fullName>Nitrogen fixation protein NifU 1</fullName>
    </recommendedName>
</protein>
<gene>
    <name type="primary">nifU1</name>
    <name type="synonym">nifUI</name>
</gene>
<name>NIFU1_RHOCA</name>
<keyword id="KW-0535">Nitrogen fixation</keyword>
<proteinExistence type="inferred from homology"/>